<protein>
    <recommendedName>
        <fullName evidence="6">Iodotyrosine deiodinase</fullName>
        <ecNumber evidence="5">1.21.1.1</ecNumber>
    </recommendedName>
    <alternativeName>
        <fullName evidence="8">Halotyrosine dehalogenase</fullName>
    </alternativeName>
</protein>
<organism evidence="9">
    <name type="scientific">Danio rerio</name>
    <name type="common">Zebrafish</name>
    <name type="synonym">Brachydanio rerio</name>
    <dbReference type="NCBI Taxonomy" id="7955"/>
    <lineage>
        <taxon>Eukaryota</taxon>
        <taxon>Metazoa</taxon>
        <taxon>Chordata</taxon>
        <taxon>Craniata</taxon>
        <taxon>Vertebrata</taxon>
        <taxon>Euteleostomi</taxon>
        <taxon>Actinopterygii</taxon>
        <taxon>Neopterygii</taxon>
        <taxon>Teleostei</taxon>
        <taxon>Ostariophysi</taxon>
        <taxon>Cypriniformes</taxon>
        <taxon>Danionidae</taxon>
        <taxon>Danioninae</taxon>
        <taxon>Danio</taxon>
    </lineage>
</organism>
<dbReference type="EC" id="1.21.1.1" evidence="5"/>
<dbReference type="EMBL" id="CR450830">
    <property type="status" value="NOT_ANNOTATED_CDS"/>
    <property type="molecule type" value="Genomic_DNA"/>
</dbReference>
<dbReference type="RefSeq" id="NP_001311483.1">
    <property type="nucleotide sequence ID" value="NM_001324554.1"/>
</dbReference>
<dbReference type="SMR" id="E7FDV5"/>
<dbReference type="FunCoup" id="E7FDV5">
    <property type="interactions" value="31"/>
</dbReference>
<dbReference type="STRING" id="7955.ENSDARP00000101952"/>
<dbReference type="PaxDb" id="7955-ENSDARP00000101952"/>
<dbReference type="Ensembl" id="ENSDART00000110282">
    <property type="protein sequence ID" value="ENSDARP00000101952"/>
    <property type="gene ID" value="ENSDARG00000076056"/>
</dbReference>
<dbReference type="GeneID" id="100330940"/>
<dbReference type="KEGG" id="dre:100330940"/>
<dbReference type="AGR" id="ZFIN:ZDB-GENE-090313-311"/>
<dbReference type="CTD" id="389434"/>
<dbReference type="ZFIN" id="ZDB-GENE-090313-311">
    <property type="gene designation" value="iyd"/>
</dbReference>
<dbReference type="eggNOG" id="KOG3936">
    <property type="taxonomic scope" value="Eukaryota"/>
</dbReference>
<dbReference type="HOGENOM" id="CLU_070764_1_0_1"/>
<dbReference type="InParanoid" id="E7FDV5"/>
<dbReference type="OMA" id="GANHQPW"/>
<dbReference type="OrthoDB" id="41362at2759"/>
<dbReference type="PhylomeDB" id="E7FDV5"/>
<dbReference type="TreeFam" id="TF313415"/>
<dbReference type="Reactome" id="R-DRE-209968">
    <property type="pathway name" value="Thyroxine biosynthesis"/>
</dbReference>
<dbReference type="PRO" id="PR:E7FDV5"/>
<dbReference type="Proteomes" id="UP000000437">
    <property type="component" value="Chromosome 23"/>
</dbReference>
<dbReference type="Bgee" id="ENSDARG00000076056">
    <property type="expression patterns" value="Expressed in intestine and 5 other cell types or tissues"/>
</dbReference>
<dbReference type="GO" id="GO:0005886">
    <property type="term" value="C:plasma membrane"/>
    <property type="evidence" value="ECO:0000318"/>
    <property type="project" value="GO_Central"/>
</dbReference>
<dbReference type="GO" id="GO:0010181">
    <property type="term" value="F:FMN binding"/>
    <property type="evidence" value="ECO:0000314"/>
    <property type="project" value="UniProtKB"/>
</dbReference>
<dbReference type="GO" id="GO:0140616">
    <property type="term" value="F:iodotyrosine deiodinase activity"/>
    <property type="evidence" value="ECO:0000314"/>
    <property type="project" value="UniProtKB"/>
</dbReference>
<dbReference type="GO" id="GO:0016491">
    <property type="term" value="F:oxidoreductase activity"/>
    <property type="evidence" value="ECO:0000318"/>
    <property type="project" value="GO_Central"/>
</dbReference>
<dbReference type="GO" id="GO:0006570">
    <property type="term" value="P:tyrosine metabolic process"/>
    <property type="evidence" value="ECO:0000318"/>
    <property type="project" value="GO_Central"/>
</dbReference>
<dbReference type="CDD" id="cd02144">
    <property type="entry name" value="iodotyrosine_dehalogenase"/>
    <property type="match status" value="1"/>
</dbReference>
<dbReference type="FunFam" id="3.40.109.10:FF:000004">
    <property type="entry name" value="Iodotyrosine deiodinase 1"/>
    <property type="match status" value="1"/>
</dbReference>
<dbReference type="Gene3D" id="3.40.109.10">
    <property type="entry name" value="NADH Oxidase"/>
    <property type="match status" value="1"/>
</dbReference>
<dbReference type="InterPro" id="IPR029479">
    <property type="entry name" value="Nitroreductase"/>
</dbReference>
<dbReference type="InterPro" id="IPR000415">
    <property type="entry name" value="Nitroreductase-like"/>
</dbReference>
<dbReference type="InterPro" id="IPR050627">
    <property type="entry name" value="Nitroreductase/BluB"/>
</dbReference>
<dbReference type="PANTHER" id="PTHR23026:SF90">
    <property type="entry name" value="IODOTYROSINE DEIODINASE 1"/>
    <property type="match status" value="1"/>
</dbReference>
<dbReference type="PANTHER" id="PTHR23026">
    <property type="entry name" value="NADPH NITROREDUCTASE"/>
    <property type="match status" value="1"/>
</dbReference>
<dbReference type="Pfam" id="PF00881">
    <property type="entry name" value="Nitroreductase"/>
    <property type="match status" value="1"/>
</dbReference>
<dbReference type="SUPFAM" id="SSF55469">
    <property type="entry name" value="FMN-dependent nitroreductase-like"/>
    <property type="match status" value="1"/>
</dbReference>
<sequence>MAVFSSLTPVFVAVLCVIIGFLFKNSQRKESRSKQKPSDQTARPWVDEDLQDDTEISTKDNEENNEDWMDTTDEENLPHVPYSPVQYSVSEMLDRSERFYTLMNLRRSVRFISPEPVPKEVIDNVIRTAGTAPSGAHTEPWTFVVVSDTDVKHRIREIIEEEEEINYKQRMGNKWVQDLKRLRTNWVKEYLDVAPYLILVFKQAYGILPSGKKKTHYYNEISVSISCGILLAALQNAGLVTVTTTPLNCGPQLRSLLQRPANEKLLMLLPVGFPASDAKVPDLKRKDLNDIMVLV</sequence>
<comment type="function">
    <text evidence="1 5">Catalyzes the dehalogenation of halotyrosines such as 3,5-diiodo-L-tyrosine (PubMed:24153409). Likely to also catalyze the dehalogenation of other halotyrosines such as 3-bromo-L-tyrosine, 3-chloro-L-tyrosine and 3-iodo-L-tyrosine (By similarity).</text>
</comment>
<comment type="catalytic activity">
    <reaction evidence="5">
        <text>2 iodide + L-tyrosine + 2 NADP(+) = 3,5-diiodo-L-tyrosine + 2 NADPH + H(+)</text>
        <dbReference type="Rhea" id="RHEA:32479"/>
        <dbReference type="ChEBI" id="CHEBI:15378"/>
        <dbReference type="ChEBI" id="CHEBI:16382"/>
        <dbReference type="ChEBI" id="CHEBI:57506"/>
        <dbReference type="ChEBI" id="CHEBI:57783"/>
        <dbReference type="ChEBI" id="CHEBI:58315"/>
        <dbReference type="ChEBI" id="CHEBI:58349"/>
        <dbReference type="EC" id="1.21.1.1"/>
    </reaction>
    <physiologicalReaction direction="right-to-left" evidence="5">
        <dbReference type="Rhea" id="RHEA:32481"/>
    </physiologicalReaction>
</comment>
<comment type="catalytic activity">
    <reaction evidence="1">
        <text>iodide + L-tyrosine + NADP(+) = 3-iodo-L-tyrosine + NADPH</text>
        <dbReference type="Rhea" id="RHEA:27453"/>
        <dbReference type="ChEBI" id="CHEBI:16382"/>
        <dbReference type="ChEBI" id="CHEBI:57783"/>
        <dbReference type="ChEBI" id="CHEBI:58315"/>
        <dbReference type="ChEBI" id="CHEBI:58349"/>
        <dbReference type="ChEBI" id="CHEBI:59898"/>
    </reaction>
    <physiologicalReaction direction="right-to-left" evidence="1">
        <dbReference type="Rhea" id="RHEA:27455"/>
    </physiologicalReaction>
</comment>
<comment type="catalytic activity">
    <reaction evidence="5">
        <text>3-iodo-L-tyrosine + iodide + NADP(+) = 3,5-diiodo-L-tyrosine + NADPH + H(+)</text>
        <dbReference type="Rhea" id="RHEA:27457"/>
        <dbReference type="ChEBI" id="CHEBI:15378"/>
        <dbReference type="ChEBI" id="CHEBI:16382"/>
        <dbReference type="ChEBI" id="CHEBI:57506"/>
        <dbReference type="ChEBI" id="CHEBI:57783"/>
        <dbReference type="ChEBI" id="CHEBI:58349"/>
        <dbReference type="ChEBI" id="CHEBI:59898"/>
    </reaction>
    <physiologicalReaction direction="right-to-left" evidence="5">
        <dbReference type="Rhea" id="RHEA:27459"/>
    </physiologicalReaction>
</comment>
<comment type="catalytic activity">
    <reaction evidence="1">
        <text>L-tyrosine + chloride + NADP(+) = 3-chloro-L-tyrosine + NADPH</text>
        <dbReference type="Rhea" id="RHEA:70343"/>
        <dbReference type="ChEBI" id="CHEBI:17996"/>
        <dbReference type="ChEBI" id="CHEBI:57783"/>
        <dbReference type="ChEBI" id="CHEBI:58315"/>
        <dbReference type="ChEBI" id="CHEBI:58349"/>
        <dbReference type="ChEBI" id="CHEBI:189422"/>
    </reaction>
    <physiologicalReaction direction="right-to-left" evidence="1">
        <dbReference type="Rhea" id="RHEA:70345"/>
    </physiologicalReaction>
</comment>
<comment type="catalytic activity">
    <reaction evidence="1">
        <text>bromide + L-tyrosine + NADP(+) = 3-bromo-L-tyrosine + NADPH</text>
        <dbReference type="Rhea" id="RHEA:70347"/>
        <dbReference type="ChEBI" id="CHEBI:15858"/>
        <dbReference type="ChEBI" id="CHEBI:57783"/>
        <dbReference type="ChEBI" id="CHEBI:58315"/>
        <dbReference type="ChEBI" id="CHEBI:58349"/>
        <dbReference type="ChEBI" id="CHEBI:189423"/>
    </reaction>
    <physiologicalReaction direction="right-to-left" evidence="1">
        <dbReference type="Rhea" id="RHEA:70349"/>
    </physiologicalReaction>
</comment>
<comment type="cofactor">
    <cofactor evidence="5">
        <name>FMN</name>
        <dbReference type="ChEBI" id="CHEBI:58210"/>
    </cofactor>
</comment>
<comment type="biophysicochemical properties">
    <kinetics>
        <KM evidence="5">8 uM for diiodotyrosine (L-DIT)</KM>
        <text evidence="5">kcat 4.1 min(-1) for the deiodination of diiodotyrosine (L-DIT).</text>
    </kinetics>
</comment>
<comment type="subcellular location">
    <subcellularLocation>
        <location evidence="3">Membrane</location>
        <topology evidence="3">Single-pass membrane protein</topology>
    </subcellularLocation>
</comment>
<comment type="similarity">
    <text evidence="7">Belongs to the nitroreductase family.</text>
</comment>
<name>IYD_DANRE</name>
<proteinExistence type="evidence at protein level"/>
<reference evidence="9" key="1">
    <citation type="journal article" date="2013" name="Nature">
        <title>The zebrafish reference genome sequence and its relationship to the human genome.</title>
        <authorList>
            <person name="Howe K."/>
            <person name="Clark M.D."/>
            <person name="Torroja C.F."/>
            <person name="Torrance J."/>
            <person name="Berthelot C."/>
            <person name="Muffato M."/>
            <person name="Collins J.E."/>
            <person name="Humphray S."/>
            <person name="McLaren K."/>
            <person name="Matthews L."/>
            <person name="McLaren S."/>
            <person name="Sealy I."/>
            <person name="Caccamo M."/>
            <person name="Churcher C."/>
            <person name="Scott C."/>
            <person name="Barrett J.C."/>
            <person name="Koch R."/>
            <person name="Rauch G.J."/>
            <person name="White S."/>
            <person name="Chow W."/>
            <person name="Kilian B."/>
            <person name="Quintais L.T."/>
            <person name="Guerra-Assuncao J.A."/>
            <person name="Zhou Y."/>
            <person name="Gu Y."/>
            <person name="Yen J."/>
            <person name="Vogel J.H."/>
            <person name="Eyre T."/>
            <person name="Redmond S."/>
            <person name="Banerjee R."/>
            <person name="Chi J."/>
            <person name="Fu B."/>
            <person name="Langley E."/>
            <person name="Maguire S.F."/>
            <person name="Laird G.K."/>
            <person name="Lloyd D."/>
            <person name="Kenyon E."/>
            <person name="Donaldson S."/>
            <person name="Sehra H."/>
            <person name="Almeida-King J."/>
            <person name="Loveland J."/>
            <person name="Trevanion S."/>
            <person name="Jones M."/>
            <person name="Quail M."/>
            <person name="Willey D."/>
            <person name="Hunt A."/>
            <person name="Burton J."/>
            <person name="Sims S."/>
            <person name="McLay K."/>
            <person name="Plumb B."/>
            <person name="Davis J."/>
            <person name="Clee C."/>
            <person name="Oliver K."/>
            <person name="Clark R."/>
            <person name="Riddle C."/>
            <person name="Elliot D."/>
            <person name="Threadgold G."/>
            <person name="Harden G."/>
            <person name="Ware D."/>
            <person name="Begum S."/>
            <person name="Mortimore B."/>
            <person name="Kerry G."/>
            <person name="Heath P."/>
            <person name="Phillimore B."/>
            <person name="Tracey A."/>
            <person name="Corby N."/>
            <person name="Dunn M."/>
            <person name="Johnson C."/>
            <person name="Wood J."/>
            <person name="Clark S."/>
            <person name="Pelan S."/>
            <person name="Griffiths G."/>
            <person name="Smith M."/>
            <person name="Glithero R."/>
            <person name="Howden P."/>
            <person name="Barker N."/>
            <person name="Lloyd C."/>
            <person name="Stevens C."/>
            <person name="Harley J."/>
            <person name="Holt K."/>
            <person name="Panagiotidis G."/>
            <person name="Lovell J."/>
            <person name="Beasley H."/>
            <person name="Henderson C."/>
            <person name="Gordon D."/>
            <person name="Auger K."/>
            <person name="Wright D."/>
            <person name="Collins J."/>
            <person name="Raisen C."/>
            <person name="Dyer L."/>
            <person name="Leung K."/>
            <person name="Robertson L."/>
            <person name="Ambridge K."/>
            <person name="Leongamornlert D."/>
            <person name="McGuire S."/>
            <person name="Gilderthorp R."/>
            <person name="Griffiths C."/>
            <person name="Manthravadi D."/>
            <person name="Nichol S."/>
            <person name="Barker G."/>
            <person name="Whitehead S."/>
            <person name="Kay M."/>
            <person name="Brown J."/>
            <person name="Murnane C."/>
            <person name="Gray E."/>
            <person name="Humphries M."/>
            <person name="Sycamore N."/>
            <person name="Barker D."/>
            <person name="Saunders D."/>
            <person name="Wallis J."/>
            <person name="Babbage A."/>
            <person name="Hammond S."/>
            <person name="Mashreghi-Mohammadi M."/>
            <person name="Barr L."/>
            <person name="Martin S."/>
            <person name="Wray P."/>
            <person name="Ellington A."/>
            <person name="Matthews N."/>
            <person name="Ellwood M."/>
            <person name="Woodmansey R."/>
            <person name="Clark G."/>
            <person name="Cooper J."/>
            <person name="Tromans A."/>
            <person name="Grafham D."/>
            <person name="Skuce C."/>
            <person name="Pandian R."/>
            <person name="Andrews R."/>
            <person name="Harrison E."/>
            <person name="Kimberley A."/>
            <person name="Garnett J."/>
            <person name="Fosker N."/>
            <person name="Hall R."/>
            <person name="Garner P."/>
            <person name="Kelly D."/>
            <person name="Bird C."/>
            <person name="Palmer S."/>
            <person name="Gehring I."/>
            <person name="Berger A."/>
            <person name="Dooley C.M."/>
            <person name="Ersan-Urun Z."/>
            <person name="Eser C."/>
            <person name="Geiger H."/>
            <person name="Geisler M."/>
            <person name="Karotki L."/>
            <person name="Kirn A."/>
            <person name="Konantz J."/>
            <person name="Konantz M."/>
            <person name="Oberlander M."/>
            <person name="Rudolph-Geiger S."/>
            <person name="Teucke M."/>
            <person name="Lanz C."/>
            <person name="Raddatz G."/>
            <person name="Osoegawa K."/>
            <person name="Zhu B."/>
            <person name="Rapp A."/>
            <person name="Widaa S."/>
            <person name="Langford C."/>
            <person name="Yang F."/>
            <person name="Schuster S.C."/>
            <person name="Carter N.P."/>
            <person name="Harrow J."/>
            <person name="Ning Z."/>
            <person name="Herrero J."/>
            <person name="Searle S.M."/>
            <person name="Enright A."/>
            <person name="Geisler R."/>
            <person name="Plasterk R.H."/>
            <person name="Lee C."/>
            <person name="Westerfield M."/>
            <person name="de Jong P.J."/>
            <person name="Zon L.I."/>
            <person name="Postlethwait J.H."/>
            <person name="Nusslein-Volhard C."/>
            <person name="Hubbard T.J."/>
            <person name="Roest Crollius H."/>
            <person name="Rogers J."/>
            <person name="Stemple D.L."/>
        </authorList>
    </citation>
    <scope>NUCLEOTIDE SEQUENCE [LARGE SCALE GENOMIC DNA]</scope>
    <source>
        <strain>Tuebingen</strain>
    </source>
</reference>
<reference evidence="7" key="2">
    <citation type="journal article" date="2014" name="Mol. Biosyst.">
        <title>Iodotyrosine deiodinase: a unique flavoprotein present in organisms of diverse phyla.</title>
        <authorList>
            <person name="Phatarphekar A."/>
            <person name="Buss J.M."/>
            <person name="Rokita S.E."/>
        </authorList>
    </citation>
    <scope>FUNCTION</scope>
    <scope>CATALYTIC ACTIVITY</scope>
    <scope>BIOPHYSICOCHEMICAL PROPERTIES</scope>
    <scope>COFACTOR</scope>
</reference>
<accession>E7FDV5</accession>
<feature type="chain" id="PRO_0000455639" description="Iodotyrosine deiodinase">
    <location>
        <begin position="1"/>
        <end position="295"/>
    </location>
</feature>
<feature type="transmembrane region" description="Helical" evidence="3">
    <location>
        <begin position="3"/>
        <end position="23"/>
    </location>
</feature>
<feature type="region of interest" description="Disordered" evidence="4">
    <location>
        <begin position="29"/>
        <end position="81"/>
    </location>
</feature>
<feature type="compositionally biased region" description="Acidic residues" evidence="4">
    <location>
        <begin position="63"/>
        <end position="75"/>
    </location>
</feature>
<feature type="binding site" evidence="1">
    <location>
        <begin position="106"/>
        <end position="110"/>
    </location>
    <ligand>
        <name>FMN</name>
        <dbReference type="ChEBI" id="CHEBI:58210"/>
    </ligand>
</feature>
<feature type="binding site" evidence="2">
    <location>
        <begin position="134"/>
        <end position="135"/>
    </location>
    <ligand>
        <name>FMN</name>
        <dbReference type="ChEBI" id="CHEBI:58210"/>
    </ligand>
</feature>
<feature type="binding site" evidence="1">
    <location>
        <position position="134"/>
    </location>
    <ligand>
        <name>FMN</name>
        <dbReference type="ChEBI" id="CHEBI:58210"/>
    </ligand>
</feature>
<feature type="binding site" evidence="1">
    <location>
        <position position="136"/>
    </location>
    <ligand>
        <name>3-iodo-L-tyrosine</name>
        <dbReference type="ChEBI" id="CHEBI:59898"/>
    </ligand>
</feature>
<feature type="binding site" evidence="1">
    <location>
        <position position="163"/>
    </location>
    <ligand>
        <name>3-iodo-L-tyrosine</name>
        <dbReference type="ChEBI" id="CHEBI:59898"/>
    </ligand>
</feature>
<feature type="binding site" evidence="1">
    <location>
        <position position="167"/>
    </location>
    <ligand>
        <name>3-iodo-L-tyrosine</name>
        <dbReference type="ChEBI" id="CHEBI:59898"/>
    </ligand>
</feature>
<feature type="binding site" evidence="1">
    <location>
        <position position="188"/>
    </location>
    <ligand>
        <name>3-iodo-L-tyrosine</name>
        <dbReference type="ChEBI" id="CHEBI:59898"/>
    </ligand>
</feature>
<feature type="binding site" evidence="1">
    <location>
        <begin position="243"/>
        <end position="245"/>
    </location>
    <ligand>
        <name>FMN</name>
        <dbReference type="ChEBI" id="CHEBI:58210"/>
    </ligand>
</feature>
<feature type="binding site" evidence="1">
    <location>
        <position position="285"/>
    </location>
    <ligand>
        <name>FMN</name>
        <dbReference type="ChEBI" id="CHEBI:58210"/>
    </ligand>
</feature>
<evidence type="ECO:0000250" key="1">
    <source>
        <dbReference type="UniProtKB" id="Q6PHW0"/>
    </source>
</evidence>
<evidence type="ECO:0000250" key="2">
    <source>
        <dbReference type="UniProtKB" id="Q9DCX8"/>
    </source>
</evidence>
<evidence type="ECO:0000255" key="3"/>
<evidence type="ECO:0000256" key="4">
    <source>
        <dbReference type="SAM" id="MobiDB-lite"/>
    </source>
</evidence>
<evidence type="ECO:0000269" key="5">
    <source>
    </source>
</evidence>
<evidence type="ECO:0000303" key="6">
    <source>
    </source>
</evidence>
<evidence type="ECO:0000305" key="7"/>
<evidence type="ECO:0000305" key="8">
    <source>
    </source>
</evidence>
<evidence type="ECO:0000312" key="9">
    <source>
        <dbReference type="Proteomes" id="UP000000437"/>
    </source>
</evidence>
<keyword id="KW-0285">Flavoprotein</keyword>
<keyword id="KW-0288">FMN</keyword>
<keyword id="KW-0472">Membrane</keyword>
<keyword id="KW-0521">NADP</keyword>
<keyword id="KW-0560">Oxidoreductase</keyword>
<keyword id="KW-1185">Reference proteome</keyword>
<keyword id="KW-0812">Transmembrane</keyword>
<keyword id="KW-1133">Transmembrane helix</keyword>
<gene>
    <name type="primary">iyd</name>
    <name type="synonym">si:ch211-286f9.2</name>
</gene>